<sequence length="278" mass="31235">MDVRQSIHSEHAKTLDTQTLRREFLIENIFVADEYTMVYSHIDRIIVGGIMPVSHSVEIGGEVGKQLGVSRLLDRRELGVINIGGAGAIIVDGQRHDIGHRDALYIGKGAKELVFVSNEASRPAKFYYNCAPAHTAYPTKKVSPADVAPVTLGDNLTSNRRTINKYFVPDVLETCQLSMGLTELAPGNLWNTMPCHTHERRMEVYLYFNMEEDSCVFHMMGQPQETRHIVMRNEQAVISPSWSIHSGVGTKAYTFIWGMVGENQVFDDMDHVAVQDLR</sequence>
<name>KDUI_SALHS</name>
<reference key="1">
    <citation type="journal article" date="2011" name="J. Bacteriol.">
        <title>Comparative genomics of 28 Salmonella enterica isolates: evidence for CRISPR-mediated adaptive sublineage evolution.</title>
        <authorList>
            <person name="Fricke W.F."/>
            <person name="Mammel M.K."/>
            <person name="McDermott P.F."/>
            <person name="Tartera C."/>
            <person name="White D.G."/>
            <person name="Leclerc J.E."/>
            <person name="Ravel J."/>
            <person name="Cebula T.A."/>
        </authorList>
    </citation>
    <scope>NUCLEOTIDE SEQUENCE [LARGE SCALE GENOMIC DNA]</scope>
    <source>
        <strain>SL476</strain>
    </source>
</reference>
<organism>
    <name type="scientific">Salmonella heidelberg (strain SL476)</name>
    <dbReference type="NCBI Taxonomy" id="454169"/>
    <lineage>
        <taxon>Bacteria</taxon>
        <taxon>Pseudomonadati</taxon>
        <taxon>Pseudomonadota</taxon>
        <taxon>Gammaproteobacteria</taxon>
        <taxon>Enterobacterales</taxon>
        <taxon>Enterobacteriaceae</taxon>
        <taxon>Salmonella</taxon>
    </lineage>
</organism>
<gene>
    <name evidence="1" type="primary">kduI</name>
    <name type="ordered locus">SeHA_C3234</name>
</gene>
<accession>B4TGS4</accession>
<keyword id="KW-0413">Isomerase</keyword>
<keyword id="KW-0479">Metal-binding</keyword>
<keyword id="KW-0862">Zinc</keyword>
<evidence type="ECO:0000255" key="1">
    <source>
        <dbReference type="HAMAP-Rule" id="MF_00687"/>
    </source>
</evidence>
<comment type="function">
    <text evidence="1">Catalyzes the isomerization of 5-dehydro-4-deoxy-D-glucuronate to 3-deoxy-D-glycero-2,5-hexodiulosonate.</text>
</comment>
<comment type="catalytic activity">
    <reaction evidence="1">
        <text>5-dehydro-4-deoxy-D-glucuronate = 3-deoxy-D-glycero-2,5-hexodiulosonate</text>
        <dbReference type="Rhea" id="RHEA:23896"/>
        <dbReference type="ChEBI" id="CHEBI:17117"/>
        <dbReference type="ChEBI" id="CHEBI:29071"/>
        <dbReference type="EC" id="5.3.1.17"/>
    </reaction>
</comment>
<comment type="cofactor">
    <cofactor evidence="1">
        <name>Zn(2+)</name>
        <dbReference type="ChEBI" id="CHEBI:29105"/>
    </cofactor>
    <text evidence="1">Binds 1 zinc ion per subunit.</text>
</comment>
<comment type="pathway">
    <text evidence="1">Glycan metabolism; pectin degradation; 2-dehydro-3-deoxy-D-gluconate from pectin: step 4/5.</text>
</comment>
<comment type="similarity">
    <text evidence="1">Belongs to the KduI family.</text>
</comment>
<dbReference type="EC" id="5.3.1.17" evidence="1"/>
<dbReference type="EMBL" id="CP001120">
    <property type="protein sequence ID" value="ACF66969.1"/>
    <property type="molecule type" value="Genomic_DNA"/>
</dbReference>
<dbReference type="RefSeq" id="WP_000383279.1">
    <property type="nucleotide sequence ID" value="NC_011083.1"/>
</dbReference>
<dbReference type="SMR" id="B4TGS4"/>
<dbReference type="KEGG" id="seh:SeHA_C3234"/>
<dbReference type="HOGENOM" id="CLU_062609_0_0_6"/>
<dbReference type="UniPathway" id="UPA00545">
    <property type="reaction ID" value="UER00826"/>
</dbReference>
<dbReference type="Proteomes" id="UP000001866">
    <property type="component" value="Chromosome"/>
</dbReference>
<dbReference type="GO" id="GO:0008697">
    <property type="term" value="F:4-deoxy-L-threo-5-hexosulose-uronate ketol-isomerase activity"/>
    <property type="evidence" value="ECO:0007669"/>
    <property type="project" value="UniProtKB-UniRule"/>
</dbReference>
<dbReference type="GO" id="GO:0008270">
    <property type="term" value="F:zinc ion binding"/>
    <property type="evidence" value="ECO:0007669"/>
    <property type="project" value="UniProtKB-UniRule"/>
</dbReference>
<dbReference type="GO" id="GO:0019698">
    <property type="term" value="P:D-galacturonate catabolic process"/>
    <property type="evidence" value="ECO:0007669"/>
    <property type="project" value="TreeGrafter"/>
</dbReference>
<dbReference type="GO" id="GO:0042840">
    <property type="term" value="P:D-glucuronate catabolic process"/>
    <property type="evidence" value="ECO:0007669"/>
    <property type="project" value="TreeGrafter"/>
</dbReference>
<dbReference type="GO" id="GO:0045490">
    <property type="term" value="P:pectin catabolic process"/>
    <property type="evidence" value="ECO:0007669"/>
    <property type="project" value="UniProtKB-UniRule"/>
</dbReference>
<dbReference type="CDD" id="cd20491">
    <property type="entry name" value="cupin_KduI_C"/>
    <property type="match status" value="1"/>
</dbReference>
<dbReference type="CDD" id="cd20294">
    <property type="entry name" value="cupin_KduI_N"/>
    <property type="match status" value="1"/>
</dbReference>
<dbReference type="FunFam" id="2.60.120.10:FF:000018">
    <property type="entry name" value="4-deoxy-L-threo-5-hexosulose-uronate ketol-isomerase"/>
    <property type="match status" value="1"/>
</dbReference>
<dbReference type="FunFam" id="2.60.120.520:FF:000001">
    <property type="entry name" value="4-deoxy-L-threo-5-hexosulose-uronate ketol-isomerase"/>
    <property type="match status" value="1"/>
</dbReference>
<dbReference type="Gene3D" id="2.60.120.10">
    <property type="entry name" value="Jelly Rolls"/>
    <property type="match status" value="1"/>
</dbReference>
<dbReference type="Gene3D" id="2.60.120.520">
    <property type="entry name" value="pectin degrading enzyme 5-keto 4- deoxyuronate isomerase, domain 1"/>
    <property type="match status" value="1"/>
</dbReference>
<dbReference type="HAMAP" id="MF_00687">
    <property type="entry name" value="KduI"/>
    <property type="match status" value="1"/>
</dbReference>
<dbReference type="InterPro" id="IPR007045">
    <property type="entry name" value="KduI"/>
</dbReference>
<dbReference type="InterPro" id="IPR021120">
    <property type="entry name" value="KduI/IolB_isomerase"/>
</dbReference>
<dbReference type="InterPro" id="IPR027449">
    <property type="entry name" value="KduI_N"/>
</dbReference>
<dbReference type="InterPro" id="IPR014710">
    <property type="entry name" value="RmlC-like_jellyroll"/>
</dbReference>
<dbReference type="InterPro" id="IPR011051">
    <property type="entry name" value="RmlC_Cupin_sf"/>
</dbReference>
<dbReference type="NCBIfam" id="NF002091">
    <property type="entry name" value="PRK00924.1"/>
    <property type="match status" value="1"/>
</dbReference>
<dbReference type="PANTHER" id="PTHR38461">
    <property type="entry name" value="4-DEOXY-L-THREO-5-HEXOSULOSE-URONATE KETOL-ISOMERASE"/>
    <property type="match status" value="1"/>
</dbReference>
<dbReference type="PANTHER" id="PTHR38461:SF1">
    <property type="entry name" value="4-DEOXY-L-THREO-5-HEXOSULOSE-URONATE KETOL-ISOMERASE"/>
    <property type="match status" value="1"/>
</dbReference>
<dbReference type="Pfam" id="PF04962">
    <property type="entry name" value="KduI"/>
    <property type="match status" value="1"/>
</dbReference>
<dbReference type="PIRSF" id="PIRSF006625">
    <property type="entry name" value="KduI"/>
    <property type="match status" value="1"/>
</dbReference>
<dbReference type="SUPFAM" id="SSF51182">
    <property type="entry name" value="RmlC-like cupins"/>
    <property type="match status" value="1"/>
</dbReference>
<proteinExistence type="inferred from homology"/>
<protein>
    <recommendedName>
        <fullName evidence="1">4-deoxy-L-threo-5-hexosulose-uronate ketol-isomerase</fullName>
        <ecNumber evidence="1">5.3.1.17</ecNumber>
    </recommendedName>
    <alternativeName>
        <fullName evidence="1">5-keto-4-deoxyuronate isomerase</fullName>
    </alternativeName>
    <alternativeName>
        <fullName evidence="1">DKI isomerase</fullName>
    </alternativeName>
</protein>
<feature type="chain" id="PRO_1000131892" description="4-deoxy-L-threo-5-hexosulose-uronate ketol-isomerase">
    <location>
        <begin position="1"/>
        <end position="278"/>
    </location>
</feature>
<feature type="binding site" evidence="1">
    <location>
        <position position="196"/>
    </location>
    <ligand>
        <name>Zn(2+)</name>
        <dbReference type="ChEBI" id="CHEBI:29105"/>
    </ligand>
</feature>
<feature type="binding site" evidence="1">
    <location>
        <position position="198"/>
    </location>
    <ligand>
        <name>Zn(2+)</name>
        <dbReference type="ChEBI" id="CHEBI:29105"/>
    </ligand>
</feature>
<feature type="binding site" evidence="1">
    <location>
        <position position="203"/>
    </location>
    <ligand>
        <name>Zn(2+)</name>
        <dbReference type="ChEBI" id="CHEBI:29105"/>
    </ligand>
</feature>
<feature type="binding site" evidence="1">
    <location>
        <position position="245"/>
    </location>
    <ligand>
        <name>Zn(2+)</name>
        <dbReference type="ChEBI" id="CHEBI:29105"/>
    </ligand>
</feature>